<feature type="chain" id="PRO_1000094015" description="4-hydroxy-tetrahydrodipicolinate reductase">
    <location>
        <begin position="1"/>
        <end position="275"/>
    </location>
</feature>
<feature type="active site" description="Proton donor/acceptor" evidence="1">
    <location>
        <position position="164"/>
    </location>
</feature>
<feature type="active site" description="Proton donor" evidence="1">
    <location>
        <position position="168"/>
    </location>
</feature>
<feature type="binding site" evidence="1">
    <location>
        <begin position="13"/>
        <end position="18"/>
    </location>
    <ligand>
        <name>NAD(+)</name>
        <dbReference type="ChEBI" id="CHEBI:57540"/>
    </ligand>
</feature>
<feature type="binding site" evidence="1">
    <location>
        <begin position="108"/>
        <end position="110"/>
    </location>
    <ligand>
        <name>NAD(+)</name>
        <dbReference type="ChEBI" id="CHEBI:57540"/>
    </ligand>
</feature>
<feature type="binding site" evidence="1">
    <location>
        <position position="165"/>
    </location>
    <ligand>
        <name>(S)-2,3,4,5-tetrahydrodipicolinate</name>
        <dbReference type="ChEBI" id="CHEBI:16845"/>
    </ligand>
</feature>
<feature type="binding site" evidence="1">
    <location>
        <begin position="174"/>
        <end position="175"/>
    </location>
    <ligand>
        <name>(S)-2,3,4,5-tetrahydrodipicolinate</name>
        <dbReference type="ChEBI" id="CHEBI:16845"/>
    </ligand>
</feature>
<protein>
    <recommendedName>
        <fullName evidence="1">4-hydroxy-tetrahydrodipicolinate reductase</fullName>
        <shortName evidence="1">HTPA reductase</shortName>
        <ecNumber evidence="1">1.17.1.8</ecNumber>
    </recommendedName>
</protein>
<comment type="function">
    <text evidence="1">Catalyzes the conversion of 4-hydroxy-tetrahydrodipicolinate (HTPA) to tetrahydrodipicolinate.</text>
</comment>
<comment type="catalytic activity">
    <reaction evidence="1">
        <text>(S)-2,3,4,5-tetrahydrodipicolinate + NAD(+) + H2O = (2S,4S)-4-hydroxy-2,3,4,5-tetrahydrodipicolinate + NADH + H(+)</text>
        <dbReference type="Rhea" id="RHEA:35323"/>
        <dbReference type="ChEBI" id="CHEBI:15377"/>
        <dbReference type="ChEBI" id="CHEBI:15378"/>
        <dbReference type="ChEBI" id="CHEBI:16845"/>
        <dbReference type="ChEBI" id="CHEBI:57540"/>
        <dbReference type="ChEBI" id="CHEBI:57945"/>
        <dbReference type="ChEBI" id="CHEBI:67139"/>
        <dbReference type="EC" id="1.17.1.8"/>
    </reaction>
</comment>
<comment type="catalytic activity">
    <reaction evidence="1">
        <text>(S)-2,3,4,5-tetrahydrodipicolinate + NADP(+) + H2O = (2S,4S)-4-hydroxy-2,3,4,5-tetrahydrodipicolinate + NADPH + H(+)</text>
        <dbReference type="Rhea" id="RHEA:35331"/>
        <dbReference type="ChEBI" id="CHEBI:15377"/>
        <dbReference type="ChEBI" id="CHEBI:15378"/>
        <dbReference type="ChEBI" id="CHEBI:16845"/>
        <dbReference type="ChEBI" id="CHEBI:57783"/>
        <dbReference type="ChEBI" id="CHEBI:58349"/>
        <dbReference type="ChEBI" id="CHEBI:67139"/>
        <dbReference type="EC" id="1.17.1.8"/>
    </reaction>
</comment>
<comment type="pathway">
    <text evidence="1">Amino-acid biosynthesis; L-lysine biosynthesis via DAP pathway; (S)-tetrahydrodipicolinate from L-aspartate: step 4/4.</text>
</comment>
<comment type="subcellular location">
    <subcellularLocation>
        <location evidence="1">Cytoplasm</location>
    </subcellularLocation>
</comment>
<comment type="similarity">
    <text evidence="1">Belongs to the DapB family.</text>
</comment>
<comment type="caution">
    <text evidence="2">Was originally thought to be a dihydrodipicolinate reductase (DHDPR), catalyzing the conversion of dihydrodipicolinate to tetrahydrodipicolinate. However, it was shown in E.coli that the substrate of the enzymatic reaction is not dihydrodipicolinate (DHDP) but in fact (2S,4S)-4-hydroxy-2,3,4,5-tetrahydrodipicolinic acid (HTPA), the product released by the DapA-catalyzed reaction.</text>
</comment>
<dbReference type="EC" id="1.17.1.8" evidence="1"/>
<dbReference type="EMBL" id="CP000951">
    <property type="protein sequence ID" value="ACA98885.1"/>
    <property type="molecule type" value="Genomic_DNA"/>
</dbReference>
<dbReference type="RefSeq" id="WP_012306509.1">
    <property type="nucleotide sequence ID" value="NZ_JAHHPU010000001.1"/>
</dbReference>
<dbReference type="SMR" id="B1XIL4"/>
<dbReference type="STRING" id="32049.SYNPCC7002_A0881"/>
<dbReference type="KEGG" id="syp:SYNPCC7002_A0881"/>
<dbReference type="eggNOG" id="COG0289">
    <property type="taxonomic scope" value="Bacteria"/>
</dbReference>
<dbReference type="HOGENOM" id="CLU_047479_0_1_3"/>
<dbReference type="UniPathway" id="UPA00034">
    <property type="reaction ID" value="UER00018"/>
</dbReference>
<dbReference type="Proteomes" id="UP000001688">
    <property type="component" value="Chromosome"/>
</dbReference>
<dbReference type="GO" id="GO:0005829">
    <property type="term" value="C:cytosol"/>
    <property type="evidence" value="ECO:0007669"/>
    <property type="project" value="TreeGrafter"/>
</dbReference>
<dbReference type="GO" id="GO:0008839">
    <property type="term" value="F:4-hydroxy-tetrahydrodipicolinate reductase"/>
    <property type="evidence" value="ECO:0007669"/>
    <property type="project" value="UniProtKB-EC"/>
</dbReference>
<dbReference type="GO" id="GO:0051287">
    <property type="term" value="F:NAD binding"/>
    <property type="evidence" value="ECO:0007669"/>
    <property type="project" value="UniProtKB-UniRule"/>
</dbReference>
<dbReference type="GO" id="GO:0050661">
    <property type="term" value="F:NADP binding"/>
    <property type="evidence" value="ECO:0007669"/>
    <property type="project" value="UniProtKB-UniRule"/>
</dbReference>
<dbReference type="GO" id="GO:0016726">
    <property type="term" value="F:oxidoreductase activity, acting on CH or CH2 groups, NAD or NADP as acceptor"/>
    <property type="evidence" value="ECO:0007669"/>
    <property type="project" value="UniProtKB-UniRule"/>
</dbReference>
<dbReference type="GO" id="GO:0019877">
    <property type="term" value="P:diaminopimelate biosynthetic process"/>
    <property type="evidence" value="ECO:0007669"/>
    <property type="project" value="UniProtKB-UniRule"/>
</dbReference>
<dbReference type="GO" id="GO:0009089">
    <property type="term" value="P:lysine biosynthetic process via diaminopimelate"/>
    <property type="evidence" value="ECO:0007669"/>
    <property type="project" value="UniProtKB-UniRule"/>
</dbReference>
<dbReference type="CDD" id="cd02274">
    <property type="entry name" value="DHDPR_N"/>
    <property type="match status" value="1"/>
</dbReference>
<dbReference type="FunFam" id="3.30.360.10:FF:000009">
    <property type="entry name" value="4-hydroxy-tetrahydrodipicolinate reductase"/>
    <property type="match status" value="1"/>
</dbReference>
<dbReference type="Gene3D" id="3.30.360.10">
    <property type="entry name" value="Dihydrodipicolinate Reductase, domain 2"/>
    <property type="match status" value="1"/>
</dbReference>
<dbReference type="Gene3D" id="3.40.50.720">
    <property type="entry name" value="NAD(P)-binding Rossmann-like Domain"/>
    <property type="match status" value="1"/>
</dbReference>
<dbReference type="HAMAP" id="MF_00102">
    <property type="entry name" value="DapB"/>
    <property type="match status" value="1"/>
</dbReference>
<dbReference type="InterPro" id="IPR022663">
    <property type="entry name" value="DapB_C"/>
</dbReference>
<dbReference type="InterPro" id="IPR000846">
    <property type="entry name" value="DapB_N"/>
</dbReference>
<dbReference type="InterPro" id="IPR022664">
    <property type="entry name" value="DapB_N_CS"/>
</dbReference>
<dbReference type="InterPro" id="IPR023940">
    <property type="entry name" value="DHDPR_bac"/>
</dbReference>
<dbReference type="InterPro" id="IPR036291">
    <property type="entry name" value="NAD(P)-bd_dom_sf"/>
</dbReference>
<dbReference type="NCBIfam" id="TIGR00036">
    <property type="entry name" value="dapB"/>
    <property type="match status" value="1"/>
</dbReference>
<dbReference type="PANTHER" id="PTHR20836:SF0">
    <property type="entry name" value="4-HYDROXY-TETRAHYDRODIPICOLINATE REDUCTASE 1, CHLOROPLASTIC-RELATED"/>
    <property type="match status" value="1"/>
</dbReference>
<dbReference type="PANTHER" id="PTHR20836">
    <property type="entry name" value="DIHYDRODIPICOLINATE REDUCTASE"/>
    <property type="match status" value="1"/>
</dbReference>
<dbReference type="Pfam" id="PF05173">
    <property type="entry name" value="DapB_C"/>
    <property type="match status" value="1"/>
</dbReference>
<dbReference type="Pfam" id="PF01113">
    <property type="entry name" value="DapB_N"/>
    <property type="match status" value="1"/>
</dbReference>
<dbReference type="PIRSF" id="PIRSF000161">
    <property type="entry name" value="DHPR"/>
    <property type="match status" value="1"/>
</dbReference>
<dbReference type="SUPFAM" id="SSF55347">
    <property type="entry name" value="Glyceraldehyde-3-phosphate dehydrogenase-like, C-terminal domain"/>
    <property type="match status" value="1"/>
</dbReference>
<dbReference type="SUPFAM" id="SSF51735">
    <property type="entry name" value="NAD(P)-binding Rossmann-fold domains"/>
    <property type="match status" value="1"/>
</dbReference>
<dbReference type="PROSITE" id="PS01298">
    <property type="entry name" value="DAPB"/>
    <property type="match status" value="1"/>
</dbReference>
<accession>B1XIL4</accession>
<evidence type="ECO:0000255" key="1">
    <source>
        <dbReference type="HAMAP-Rule" id="MF_00102"/>
    </source>
</evidence>
<evidence type="ECO:0000305" key="2"/>
<reference key="1">
    <citation type="submission" date="2008-02" db="EMBL/GenBank/DDBJ databases">
        <title>Complete sequence of Synechococcus sp. PCC 7002.</title>
        <authorList>
            <person name="Li T."/>
            <person name="Zhao J."/>
            <person name="Zhao C."/>
            <person name="Liu Z."/>
            <person name="Zhao F."/>
            <person name="Marquardt J."/>
            <person name="Nomura C.T."/>
            <person name="Persson S."/>
            <person name="Detter J.C."/>
            <person name="Richardson P.M."/>
            <person name="Lanz C."/>
            <person name="Schuster S.C."/>
            <person name="Wang J."/>
            <person name="Li S."/>
            <person name="Huang X."/>
            <person name="Cai T."/>
            <person name="Yu Z."/>
            <person name="Luo J."/>
            <person name="Zhao J."/>
            <person name="Bryant D.A."/>
        </authorList>
    </citation>
    <scope>NUCLEOTIDE SEQUENCE [LARGE SCALE GENOMIC DNA]</scope>
    <source>
        <strain>ATCC 27264 / PCC 7002 / PR-6</strain>
    </source>
</reference>
<organism>
    <name type="scientific">Picosynechococcus sp. (strain ATCC 27264 / PCC 7002 / PR-6)</name>
    <name type="common">Agmenellum quadruplicatum</name>
    <dbReference type="NCBI Taxonomy" id="32049"/>
    <lineage>
        <taxon>Bacteria</taxon>
        <taxon>Bacillati</taxon>
        <taxon>Cyanobacteriota</taxon>
        <taxon>Cyanophyceae</taxon>
        <taxon>Oscillatoriophycideae</taxon>
        <taxon>Chroococcales</taxon>
        <taxon>Geminocystaceae</taxon>
        <taxon>Picosynechococcus</taxon>
    </lineage>
</organism>
<sequence>MENINKIPVVINGAGGKMGREVVKAVAGAADMEIIAAVDKNPALLGQDAGEIAGCGAVEVPIVNDLEASLVMATQSKIQGVMVDFTHPSGVYANTRAAIAYGVRPVVGTTGLSEEQINDLKEFAEKASTGALIIPNFSIGVVLLQQASLQAAKYFDHVEIIELHHNQKADAPSGTAIKTAQMLAELGKQFNPAEVEEKEEMPGAKGAVTEDNIRIHSVRLPGLIAHQEMIFGAPGQIYTLRHDTSDRSCYMPGVLLSIRKVTELNTLVYGLENIL</sequence>
<proteinExistence type="inferred from homology"/>
<name>DAPB_PICP2</name>
<gene>
    <name evidence="1" type="primary">dapB</name>
    <name type="ordered locus">SYNPCC7002_A0881</name>
</gene>
<keyword id="KW-0028">Amino-acid biosynthesis</keyword>
<keyword id="KW-0963">Cytoplasm</keyword>
<keyword id="KW-0220">Diaminopimelate biosynthesis</keyword>
<keyword id="KW-0457">Lysine biosynthesis</keyword>
<keyword id="KW-0520">NAD</keyword>
<keyword id="KW-0521">NADP</keyword>
<keyword id="KW-0560">Oxidoreductase</keyword>
<keyword id="KW-1185">Reference proteome</keyword>